<dbReference type="EC" id="1.3.1.106"/>
<dbReference type="EMBL" id="AF402610">
    <property type="protein sequence ID" value="AAK94917.2"/>
    <property type="molecule type" value="Genomic_DNA"/>
</dbReference>
<dbReference type="RefSeq" id="WP_104837433.1">
    <property type="nucleotide sequence ID" value="NZ_CP026606.1"/>
</dbReference>
<dbReference type="SMR" id="Q977V1"/>
<dbReference type="GeneID" id="36101478"/>
<dbReference type="KEGG" id="ag:AAK94917"/>
<dbReference type="BRENDA" id="1.3.1.106">
    <property type="organism ID" value="3262"/>
</dbReference>
<dbReference type="BRENDA" id="1.3.1.54">
    <property type="organism ID" value="3262"/>
</dbReference>
<dbReference type="UniPathway" id="UPA00148">
    <property type="reaction ID" value="UER00228"/>
</dbReference>
<dbReference type="GO" id="GO:0016994">
    <property type="term" value="F:precorrin-6A reductase activity"/>
    <property type="evidence" value="ECO:0007669"/>
    <property type="project" value="InterPro"/>
</dbReference>
<dbReference type="GO" id="GO:0009236">
    <property type="term" value="P:cobalamin biosynthetic process"/>
    <property type="evidence" value="ECO:0007669"/>
    <property type="project" value="UniProtKB-UniPathway"/>
</dbReference>
<dbReference type="InterPro" id="IPR003723">
    <property type="entry name" value="Precorrin-6x_reduct"/>
</dbReference>
<dbReference type="NCBIfam" id="TIGR00715">
    <property type="entry name" value="precor6x_red"/>
    <property type="match status" value="1"/>
</dbReference>
<dbReference type="PANTHER" id="PTHR36925">
    <property type="entry name" value="COBALT-PRECORRIN-6A REDUCTASE"/>
    <property type="match status" value="1"/>
</dbReference>
<dbReference type="PANTHER" id="PTHR36925:SF1">
    <property type="entry name" value="COBALT-PRECORRIN-6A REDUCTASE"/>
    <property type="match status" value="1"/>
</dbReference>
<dbReference type="Pfam" id="PF02571">
    <property type="entry name" value="CbiJ"/>
    <property type="match status" value="1"/>
</dbReference>
<dbReference type="PROSITE" id="PS51014">
    <property type="entry name" value="COBK_CBIJ"/>
    <property type="match status" value="1"/>
</dbReference>
<evidence type="ECO:0000255" key="1">
    <source>
        <dbReference type="PROSITE-ProRule" id="PRU00356"/>
    </source>
</evidence>
<evidence type="ECO:0000269" key="2">
    <source>
    </source>
</evidence>
<protein>
    <recommendedName>
        <fullName>Cobalt-precorrin-6A reductase</fullName>
        <ecNumber>1.3.1.106</ecNumber>
    </recommendedName>
</protein>
<accession>Q977V1</accession>
<comment type="function">
    <text evidence="2">Catalyzes the reduction of the macrocycle of cobalt-precorrin-6A to cobalt-precorrin-6B.</text>
</comment>
<comment type="catalytic activity">
    <reaction>
        <text>Co-precorrin-6B + NAD(+) = Co-precorrin-6A + NADH + H(+)</text>
        <dbReference type="Rhea" id="RHEA:15625"/>
        <dbReference type="ChEBI" id="CHEBI:15378"/>
        <dbReference type="ChEBI" id="CHEBI:57540"/>
        <dbReference type="ChEBI" id="CHEBI:57945"/>
        <dbReference type="ChEBI" id="CHEBI:60064"/>
        <dbReference type="ChEBI" id="CHEBI:72780"/>
        <dbReference type="EC" id="1.3.1.106"/>
    </reaction>
</comment>
<comment type="pathway">
    <text>Cofactor biosynthesis; adenosylcobalamin biosynthesis; cob(II)yrinate a,c-diamide from sirohydrochlorin (anaerobic route): step 7/10.</text>
</comment>
<comment type="similarity">
    <text evidence="1">Belongs to the precorrin-6x reductase family.</text>
</comment>
<gene>
    <name type="primary">cbiJ</name>
</gene>
<name>CBIJ_METMI</name>
<organism>
    <name type="scientific">Methanococcus maripaludis</name>
    <name type="common">Methanococcus deltae</name>
    <dbReference type="NCBI Taxonomy" id="39152"/>
    <lineage>
        <taxon>Archaea</taxon>
        <taxon>Methanobacteriati</taxon>
        <taxon>Methanobacteriota</taxon>
        <taxon>Methanomada group</taxon>
        <taxon>Methanococci</taxon>
        <taxon>Methanococcales</taxon>
        <taxon>Methanococcaceae</taxon>
        <taxon>Methanococcus</taxon>
    </lineage>
</organism>
<sequence length="248" mass="27999">MNIWIRGGTSDANNISKEIKRNFKDSFLILTTTTDFGGKIAENFADLVISEKMTYDNLKKTLLDKKIDVFIDATHPFATHASETGIKISKELNIPYIRYERPSEKFKNAFYVENYEEAAKLALKISKKNIFYMSGIKNLKNVSEIIPIEKLIVRILPTSVPEALKILPSKNIVAMQGVFSENLNKELIIDYNCDVIITKDSGKSGGLYEKVSGATLAGAKPIIIKRPEINYPLKFEKIVEIVNYLKNV</sequence>
<feature type="chain" id="PRO_0000429643" description="Cobalt-precorrin-6A reductase">
    <location>
        <begin position="1"/>
        <end position="248"/>
    </location>
</feature>
<proteinExistence type="inferred from homology"/>
<keyword id="KW-0169">Cobalamin biosynthesis</keyword>
<keyword id="KW-0520">NAD</keyword>
<keyword id="KW-0560">Oxidoreductase</keyword>
<reference key="1">
    <citation type="journal article" date="2005" name="Archaea">
        <title>Role of the precorrin 6-X reductase gene in cobamide biosynthesis in Methanococcus maripaludis.</title>
        <authorList>
            <person name="Kim W."/>
            <person name="Major T.A."/>
            <person name="Whitman W.B."/>
        </authorList>
    </citation>
    <scope>NUCLEOTIDE SEQUENCE [GENOMIC DNA]</scope>
    <scope>FUNCTION</scope>
    <source>
        <strain>ATCC 43000 / DSM 2067 / JCM 10722 / JJ</strain>
    </source>
</reference>